<keyword id="KW-0007">Acetylation</keyword>
<keyword id="KW-1048">Host nucleus</keyword>
<keyword id="KW-0449">Lipoprotein</keyword>
<keyword id="KW-0488">Methylation</keyword>
<keyword id="KW-0597">Phosphoprotein</keyword>
<keyword id="KW-0636">Prenylation</keyword>
<keyword id="KW-1185">Reference proteome</keyword>
<keyword id="KW-0691">RNA editing</keyword>
<keyword id="KW-0694">RNA-binding</keyword>
<keyword id="KW-1163">Viral penetration into host nucleus</keyword>
<keyword id="KW-0946">Virion</keyword>
<keyword id="KW-1160">Virus entry into host cell</keyword>
<name>LHDAG_HDVD3</name>
<evidence type="ECO:0000250" key="1"/>
<evidence type="ECO:0000250" key="2">
    <source>
        <dbReference type="UniProtKB" id="P0C6L3"/>
    </source>
</evidence>
<evidence type="ECO:0000255" key="3"/>
<evidence type="ECO:0000255" key="4">
    <source>
        <dbReference type="PROSITE-ProRule" id="PRU01183"/>
    </source>
</evidence>
<evidence type="ECO:0000256" key="5">
    <source>
        <dbReference type="SAM" id="MobiDB-lite"/>
    </source>
</evidence>
<evidence type="ECO:0000269" key="6">
    <source>
    </source>
</evidence>
<evidence type="ECO:0000269" key="7">
    <source>
    </source>
</evidence>
<evidence type="ECO:0000269" key="8">
    <source>
    </source>
</evidence>
<evidence type="ECO:0000269" key="9">
    <source>
    </source>
</evidence>
<evidence type="ECO:0000269" key="10">
    <source>
    </source>
</evidence>
<evidence type="ECO:0000269" key="11">
    <source>
    </source>
</evidence>
<evidence type="ECO:0000269" key="12">
    <source>
    </source>
</evidence>
<evidence type="ECO:0000269" key="13">
    <source>
    </source>
</evidence>
<evidence type="ECO:0000305" key="14"/>
<evidence type="ECO:0000305" key="15">
    <source>
    </source>
</evidence>
<dbReference type="EMBL" id="D01075">
    <property type="protein sequence ID" value="BAA00874.1"/>
    <property type="status" value="ALT_TERM"/>
    <property type="molecule type" value="Genomic_RNA"/>
</dbReference>
<dbReference type="SMR" id="P29996"/>
<dbReference type="iPTMnet" id="P29996"/>
<dbReference type="Proteomes" id="UP000006675">
    <property type="component" value="Segment"/>
</dbReference>
<dbReference type="GO" id="GO:0043657">
    <property type="term" value="C:host cell"/>
    <property type="evidence" value="ECO:0007669"/>
    <property type="project" value="GOC"/>
</dbReference>
<dbReference type="GO" id="GO:0044196">
    <property type="term" value="C:host cell nucleolus"/>
    <property type="evidence" value="ECO:0007669"/>
    <property type="project" value="UniProtKB-SubCell"/>
</dbReference>
<dbReference type="GO" id="GO:0044423">
    <property type="term" value="C:virion component"/>
    <property type="evidence" value="ECO:0007669"/>
    <property type="project" value="UniProtKB-KW"/>
</dbReference>
<dbReference type="GO" id="GO:0003723">
    <property type="term" value="F:RNA binding"/>
    <property type="evidence" value="ECO:0007669"/>
    <property type="project" value="UniProtKB-KW"/>
</dbReference>
<dbReference type="GO" id="GO:0039675">
    <property type="term" value="P:exit of virus from host cell nucleus through nuclear pore"/>
    <property type="evidence" value="ECO:0000314"/>
    <property type="project" value="UniProtKB"/>
</dbReference>
<dbReference type="GO" id="GO:0046718">
    <property type="term" value="P:symbiont entry into host cell"/>
    <property type="evidence" value="ECO:0007669"/>
    <property type="project" value="UniProtKB-KW"/>
</dbReference>
<dbReference type="GO" id="GO:0075732">
    <property type="term" value="P:viral penetration into host nucleus"/>
    <property type="evidence" value="ECO:0007669"/>
    <property type="project" value="UniProtKB-KW"/>
</dbReference>
<dbReference type="Gene3D" id="4.10.220.40">
    <property type="entry name" value="Delta antigen, N-terminal"/>
    <property type="match status" value="1"/>
</dbReference>
<dbReference type="InterPro" id="IPR027403">
    <property type="entry name" value="Delta_antigen_N"/>
</dbReference>
<dbReference type="InterPro" id="IPR037517">
    <property type="entry name" value="HDAG_dom"/>
</dbReference>
<dbReference type="InterPro" id="IPR002506">
    <property type="entry name" value="HDV_ag"/>
</dbReference>
<dbReference type="Pfam" id="PF01517">
    <property type="entry name" value="HDV_ag"/>
    <property type="match status" value="1"/>
</dbReference>
<dbReference type="SUPFAM" id="SSF58108">
    <property type="entry name" value="Oligomerization domain of hepatitis delta antigen"/>
    <property type="match status" value="1"/>
</dbReference>
<dbReference type="PROSITE" id="PS51838">
    <property type="entry name" value="HDAG"/>
    <property type="match status" value="1"/>
</dbReference>
<accession>P29996</accession>
<proteinExistence type="evidence at protein level"/>
<reference key="1">
    <citation type="journal article" date="1990" name="J. Gen. Virol.">
        <title>Cloning and sequencing of RNA of hepatitis delta virus isolated from human serum.</title>
        <authorList>
            <person name="Saldanha J.A."/>
            <person name="Thomas H.C."/>
            <person name="Monjardino J.P."/>
        </authorList>
    </citation>
    <scope>NUCLEOTIDE SEQUENCE [GENOMIC RNA]</scope>
</reference>
<reference key="2">
    <citation type="journal article" date="1992" name="J. Virol.">
        <title>Characterization of nuclear targeting signal of hepatitis delta antigen: nuclear transport as a protein complex.</title>
        <authorList>
            <person name="Xia Y.-P."/>
            <person name="Yeh C.-T."/>
            <person name="Ou J.-H."/>
            <person name="Lai M.M.C."/>
        </authorList>
    </citation>
    <scope>NUCLEAR LOCALIZATION SIGNAL</scope>
    <scope>SUBCELLULAR LOCATION</scope>
</reference>
<reference key="3">
    <citation type="journal article" date="1993" name="J. Virol.">
        <title>Isoprenylation mediates direct protein-protein interactions between hepatitis large delta antigen and hepatitis B virus surface antigen.</title>
        <authorList>
            <person name="Hwang S.B."/>
            <person name="Lai M.M."/>
        </authorList>
    </citation>
    <scope>ISOPRENYLATION AT CYS-211</scope>
    <scope>INTERACTION WITH HBV HBSAG</scope>
</reference>
<reference key="4">
    <citation type="journal article" date="1996" name="J. Biol. Chem.">
        <title>The hepatitis delta virus large antigen is farnesylated both in vitro and in animal cells.</title>
        <authorList>
            <person name="Otto J.C."/>
            <person name="Casey P.J."/>
        </authorList>
    </citation>
    <scope>ISOPRENYLATION AT CYS-211</scope>
    <scope>METHYLATION AT CYS-211</scope>
</reference>
<reference key="5">
    <citation type="journal article" date="1999" name="J. Virol.">
        <title>Characterization of the phosphorylated forms and the phosphorylated residues of hepatitis delta virus delta antigens.</title>
        <authorList>
            <person name="Mu J.J."/>
            <person name="Wu H.L."/>
            <person name="Chiang B.L."/>
            <person name="Chang R.P."/>
            <person name="Chen D.S."/>
            <person name="Chen P.J."/>
        </authorList>
    </citation>
    <scope>PHOSPHORYLATION AT SER-2; SER-123 AND SER-177</scope>
</reference>
<reference key="6">
    <citation type="journal article" date="2002" name="J. Virol.">
        <title>Large hepatitis delta antigen is not a suppressor of hepatitis delta virus RNA synthesis once RNA replication is established.</title>
        <authorList>
            <person name="Macnaughton T.B."/>
            <person name="Lai M.M."/>
        </authorList>
    </citation>
    <scope>FUNCTION</scope>
</reference>
<reference key="7">
    <citation type="journal article" date="2003" name="J. Virol.">
        <title>Determination of the multimerization state of the hepatitis delta virus antigens in vivo.</title>
        <authorList>
            <person name="Cornillez-Ty C.T."/>
            <person name="Lazinski D.W."/>
        </authorList>
    </citation>
    <scope>SUBUNIT</scope>
</reference>
<reference key="8">
    <citation type="journal article" date="2005" name="Acta Virol.">
        <title>Hepatitis D.</title>
        <authorList>
            <person name="Husa P."/>
            <person name="Linhartova A."/>
            <person name="Nemecek V."/>
            <person name="Husova L."/>
        </authorList>
    </citation>
    <scope>REVIEW</scope>
</reference>
<reference key="9">
    <citation type="journal article" date="2006" name="Curr. Top. Microbiol. Immunol.">
        <title>Post-translational modification of delta antigen of hepatitis D virus.</title>
        <authorList>
            <person name="Huang W.H."/>
            <person name="Chen C.W."/>
            <person name="Wu H.L."/>
            <person name="Chen P.J."/>
        </authorList>
    </citation>
    <scope>REVIEW</scope>
</reference>
<reference key="10">
    <citation type="journal article" date="2007" name="J. Virol.">
        <title>Large hepatitis delta antigen is a novel clathrin adaptor-like protein.</title>
        <authorList>
            <person name="Huang C."/>
            <person name="Chang S.C."/>
            <person name="Yu I.C."/>
            <person name="Tsay Y.G."/>
            <person name="Chang M.F."/>
        </authorList>
    </citation>
    <scope>FUNCTION</scope>
</reference>
<reference key="11">
    <citation type="journal article" date="2008" name="Virology">
        <title>Characterization of the nuclear localization signal of the hepatitis delta virus antigen.</title>
        <authorList>
            <person name="Alves C."/>
            <person name="Freitas N."/>
            <person name="Cunha C."/>
        </authorList>
    </citation>
    <scope>NUCLEAR LOCALIZATION SIGNAL</scope>
    <scope>RNA-BINDING</scope>
</reference>
<organismHost>
    <name type="scientific">Homo sapiens</name>
    <name type="common">Human</name>
    <dbReference type="NCBI Taxonomy" id="9606"/>
</organismHost>
<sequence>MSRPEGRKNRGGREEVLEQWVSGRKKLEELERDLRKVKKKIKKLEDEHPWLGNIKGILGKKDKDGEGAPPAKRARTDQMEVDSGPRKRPSRGGFTDKERQDHRRRKALENKRKQLSAGGKNLSKEEEEELRRLTEEDERRERRIAGPQVGGVNPLEGGTRGAPGGGFVPSMQGVPESPFTRTGEGLDIRGSQGFPWDILFPADPPSSPQSCRPQ</sequence>
<organism>
    <name type="scientific">Hepatitis delta virus genotype I (isolate D380)</name>
    <name type="common">HDV</name>
    <dbReference type="NCBI Taxonomy" id="31762"/>
    <lineage>
        <taxon>Viruses</taxon>
        <taxon>Ribozyviria</taxon>
        <taxon>Kolmioviridae</taxon>
        <taxon>Deltavirus</taxon>
        <taxon>Hepatitis delta virus</taxon>
    </lineage>
</organism>
<protein>
    <recommendedName>
        <fullName>Large delta antigen</fullName>
        <shortName>L-HDAg</shortName>
    </recommendedName>
    <alternativeName>
        <fullName>p27</fullName>
    </alternativeName>
</protein>
<feature type="chain" id="PRO_0000038130" description="Large delta antigen">
    <location>
        <begin position="1"/>
        <end position="211"/>
    </location>
</feature>
<feature type="propeptide" id="PRO_0000396787" description="Removed in mature form" evidence="14">
    <location>
        <begin position="212"/>
        <end position="214"/>
    </location>
</feature>
<feature type="domain" description="HDAg" evidence="4">
    <location>
        <begin position="20"/>
        <end position="195"/>
    </location>
</feature>
<feature type="region of interest" description="Dimerization" evidence="3">
    <location>
        <begin position="12"/>
        <end position="60"/>
    </location>
</feature>
<feature type="region of interest" description="Disordered" evidence="5">
    <location>
        <begin position="41"/>
        <end position="214"/>
    </location>
</feature>
<feature type="region of interest" description="RNA-binding" evidence="4">
    <location>
        <begin position="97"/>
        <end position="107"/>
    </location>
</feature>
<feature type="region of interest" description="RNAPII-binding" evidence="4">
    <location>
        <begin position="130"/>
        <end position="195"/>
    </location>
</feature>
<feature type="region of interest" description="RNA-binding" evidence="4">
    <location>
        <begin position="136"/>
        <end position="146"/>
    </location>
</feature>
<feature type="short sequence motif" description="Nuclear localization signal" evidence="9 11">
    <location>
        <begin position="66"/>
        <end position="75"/>
    </location>
</feature>
<feature type="compositionally biased region" description="Basic and acidic residues" evidence="5">
    <location>
        <begin position="94"/>
        <end position="112"/>
    </location>
</feature>
<feature type="compositionally biased region" description="Basic and acidic residues" evidence="5">
    <location>
        <begin position="129"/>
        <end position="144"/>
    </location>
</feature>
<feature type="compositionally biased region" description="Gly residues" evidence="5">
    <location>
        <begin position="158"/>
        <end position="167"/>
    </location>
</feature>
<feature type="modified residue" description="Phosphoserine; by host" evidence="6">
    <location>
        <position position="2"/>
    </location>
</feature>
<feature type="modified residue" description="Omega-N-methylated arginine; by host" evidence="2">
    <location>
        <position position="13"/>
    </location>
</feature>
<feature type="modified residue" description="N6-acetyllysine; by host" evidence="2">
    <location>
        <position position="72"/>
    </location>
</feature>
<feature type="modified residue" description="Phosphoserine; by host" evidence="6">
    <location>
        <position position="123"/>
    </location>
</feature>
<feature type="modified residue" description="Phosphoserine; by host" evidence="6">
    <location>
        <position position="177"/>
    </location>
</feature>
<feature type="modified residue" description="Cysteine methyl ester; by host" evidence="15">
    <location>
        <position position="211"/>
    </location>
</feature>
<feature type="lipid moiety-binding region" description="S-farnesyl cysteine; by host" evidence="12 13">
    <location>
        <position position="211"/>
    </location>
</feature>
<comment type="function">
    <text evidence="7 10">Following virus entry into host cell, provides nuclear import of HDV RNPs thanks to its nuclear localization signal. Needs co-infection with hepatitis B virus to provide surface proteins, otherwise there is no packaging or budding. Packages the HDV ribonucleoprotein in hepatitis B virus empty particles. Interacts with both HDV genomic RNA and cytoplasmic tail of HBsAg. May inhibit viral RNA replication.</text>
</comment>
<comment type="subunit">
    <text evidence="8 12">Homodimer. Homooctamer. Interacts with HBV HBsAg. May interact with clathrin to induce virion budding.</text>
</comment>
<comment type="subcellular location">
    <subcellularLocation>
        <location evidence="9">Virion</location>
    </subcellularLocation>
    <subcellularLocation>
        <location evidence="9">Host nucleus</location>
        <location evidence="9">Host nucleolus</location>
    </subcellularLocation>
    <text>isoprenylated in the cytoplasm, and translocates in the nucleus possibly after phosphorylation. Translocates after to nuclear speckle, then to the ER membrane where interaction with Hepatitis B virus antigene takes place.</text>
</comment>
<comment type="PTM">
    <text evidence="12 13">Prenylated by host farnesyl-transferase in the cytoplasm prior to nucleus translocation.</text>
</comment>
<comment type="PTM">
    <text evidence="6">Phosphorylated at serines by host CK2 and other kinases. phosphorylation does not seem to be important for its function.</text>
</comment>
<comment type="RNA editing">
    <location>
        <position position="196" evidence="1"/>
    </location>
    <text evidence="1">Partially edited. RNA editing at this position occurs on the antigenomic strand and consists of a conversion of A to G catalyzed by the cellular enzyme ADAR1. The unedited RNA version gives rise to the small delta antigen (AC P0C6L3), which ends with a nonsense codon at position 196. In the edited version, this amber codon is modified to a tryptophan codon and gives rise to the large delta antigen protein. S-HDAg suppresses editing of non-replicating antigenomic RNA, thereby regulating the extent of editing (By similarity).</text>
</comment>
<comment type="similarity">
    <text evidence="14">Belongs to the hepatitis delta antigen family.</text>
</comment>